<protein>
    <recommendedName>
        <fullName evidence="1">Heme A synthase</fullName>
        <shortName evidence="1">HAS</shortName>
        <ecNumber evidence="1">1.17.99.9</ecNumber>
    </recommendedName>
    <alternativeName>
        <fullName evidence="1">Cytochrome aa3-controlling protein</fullName>
    </alternativeName>
</protein>
<accession>Q92QR8</accession>
<proteinExistence type="inferred from homology"/>
<dbReference type="EC" id="1.17.99.9" evidence="1"/>
<dbReference type="EMBL" id="AL591688">
    <property type="protein sequence ID" value="CAC45818.1"/>
    <property type="molecule type" value="Genomic_DNA"/>
</dbReference>
<dbReference type="RefSeq" id="NP_385345.1">
    <property type="nucleotide sequence ID" value="NC_003047.1"/>
</dbReference>
<dbReference type="RefSeq" id="WP_010969128.1">
    <property type="nucleotide sequence ID" value="NC_003047.1"/>
</dbReference>
<dbReference type="SMR" id="Q92QR8"/>
<dbReference type="EnsemblBacteria" id="CAC45818">
    <property type="protein sequence ID" value="CAC45818"/>
    <property type="gene ID" value="SMc01800"/>
</dbReference>
<dbReference type="KEGG" id="sme:SMc01800"/>
<dbReference type="PATRIC" id="fig|266834.11.peg.2651"/>
<dbReference type="eggNOG" id="COG1612">
    <property type="taxonomic scope" value="Bacteria"/>
</dbReference>
<dbReference type="HOGENOM" id="CLU_017627_0_0_5"/>
<dbReference type="OrthoDB" id="9793156at2"/>
<dbReference type="UniPathway" id="UPA00269">
    <property type="reaction ID" value="UER00713"/>
</dbReference>
<dbReference type="Proteomes" id="UP000001976">
    <property type="component" value="Chromosome"/>
</dbReference>
<dbReference type="GO" id="GO:0005886">
    <property type="term" value="C:plasma membrane"/>
    <property type="evidence" value="ECO:0007669"/>
    <property type="project" value="UniProtKB-SubCell"/>
</dbReference>
<dbReference type="GO" id="GO:0046872">
    <property type="term" value="F:metal ion binding"/>
    <property type="evidence" value="ECO:0007669"/>
    <property type="project" value="UniProtKB-KW"/>
</dbReference>
<dbReference type="GO" id="GO:0016653">
    <property type="term" value="F:oxidoreductase activity, acting on NAD(P)H, heme protein as acceptor"/>
    <property type="evidence" value="ECO:0007669"/>
    <property type="project" value="InterPro"/>
</dbReference>
<dbReference type="GO" id="GO:0006784">
    <property type="term" value="P:heme A biosynthetic process"/>
    <property type="evidence" value="ECO:0007669"/>
    <property type="project" value="UniProtKB-UniRule"/>
</dbReference>
<dbReference type="HAMAP" id="MF_01665">
    <property type="entry name" value="HemeA_synth_type2"/>
    <property type="match status" value="1"/>
</dbReference>
<dbReference type="InterPro" id="IPR003780">
    <property type="entry name" value="COX15/CtaA_fam"/>
</dbReference>
<dbReference type="InterPro" id="IPR023754">
    <property type="entry name" value="HemeA_Synthase_type2"/>
</dbReference>
<dbReference type="PANTHER" id="PTHR23289">
    <property type="entry name" value="CYTOCHROME C OXIDASE ASSEMBLY PROTEIN COX15"/>
    <property type="match status" value="1"/>
</dbReference>
<dbReference type="PANTHER" id="PTHR23289:SF2">
    <property type="entry name" value="CYTOCHROME C OXIDASE ASSEMBLY PROTEIN COX15 HOMOLOG"/>
    <property type="match status" value="1"/>
</dbReference>
<dbReference type="Pfam" id="PF02628">
    <property type="entry name" value="COX15-CtaA"/>
    <property type="match status" value="1"/>
</dbReference>
<keyword id="KW-1003">Cell membrane</keyword>
<keyword id="KW-0350">Heme biosynthesis</keyword>
<keyword id="KW-0408">Iron</keyword>
<keyword id="KW-0472">Membrane</keyword>
<keyword id="KW-0479">Metal-binding</keyword>
<keyword id="KW-0560">Oxidoreductase</keyword>
<keyword id="KW-1185">Reference proteome</keyword>
<keyword id="KW-0812">Transmembrane</keyword>
<keyword id="KW-1133">Transmembrane helix</keyword>
<reference key="1">
    <citation type="journal article" date="2001" name="Proc. Natl. Acad. Sci. U.S.A.">
        <title>Analysis of the chromosome sequence of the legume symbiont Sinorhizobium meliloti strain 1021.</title>
        <authorList>
            <person name="Capela D."/>
            <person name="Barloy-Hubler F."/>
            <person name="Gouzy J."/>
            <person name="Bothe G."/>
            <person name="Ampe F."/>
            <person name="Batut J."/>
            <person name="Boistard P."/>
            <person name="Becker A."/>
            <person name="Boutry M."/>
            <person name="Cadieu E."/>
            <person name="Dreano S."/>
            <person name="Gloux S."/>
            <person name="Godrie T."/>
            <person name="Goffeau A."/>
            <person name="Kahn D."/>
            <person name="Kiss E."/>
            <person name="Lelaure V."/>
            <person name="Masuy D."/>
            <person name="Pohl T."/>
            <person name="Portetelle D."/>
            <person name="Puehler A."/>
            <person name="Purnelle B."/>
            <person name="Ramsperger U."/>
            <person name="Renard C."/>
            <person name="Thebault P."/>
            <person name="Vandenbol M."/>
            <person name="Weidner S."/>
            <person name="Galibert F."/>
        </authorList>
    </citation>
    <scope>NUCLEOTIDE SEQUENCE [LARGE SCALE GENOMIC DNA]</scope>
    <source>
        <strain>1021</strain>
    </source>
</reference>
<reference key="2">
    <citation type="journal article" date="2001" name="Science">
        <title>The composite genome of the legume symbiont Sinorhizobium meliloti.</title>
        <authorList>
            <person name="Galibert F."/>
            <person name="Finan T.M."/>
            <person name="Long S.R."/>
            <person name="Puehler A."/>
            <person name="Abola P."/>
            <person name="Ampe F."/>
            <person name="Barloy-Hubler F."/>
            <person name="Barnett M.J."/>
            <person name="Becker A."/>
            <person name="Boistard P."/>
            <person name="Bothe G."/>
            <person name="Boutry M."/>
            <person name="Bowser L."/>
            <person name="Buhrmester J."/>
            <person name="Cadieu E."/>
            <person name="Capela D."/>
            <person name="Chain P."/>
            <person name="Cowie A."/>
            <person name="Davis R.W."/>
            <person name="Dreano S."/>
            <person name="Federspiel N.A."/>
            <person name="Fisher R.F."/>
            <person name="Gloux S."/>
            <person name="Godrie T."/>
            <person name="Goffeau A."/>
            <person name="Golding B."/>
            <person name="Gouzy J."/>
            <person name="Gurjal M."/>
            <person name="Hernandez-Lucas I."/>
            <person name="Hong A."/>
            <person name="Huizar L."/>
            <person name="Hyman R.W."/>
            <person name="Jones T."/>
            <person name="Kahn D."/>
            <person name="Kahn M.L."/>
            <person name="Kalman S."/>
            <person name="Keating D.H."/>
            <person name="Kiss E."/>
            <person name="Komp C."/>
            <person name="Lelaure V."/>
            <person name="Masuy D."/>
            <person name="Palm C."/>
            <person name="Peck M.C."/>
            <person name="Pohl T.M."/>
            <person name="Portetelle D."/>
            <person name="Purnelle B."/>
            <person name="Ramsperger U."/>
            <person name="Surzycki R."/>
            <person name="Thebault P."/>
            <person name="Vandenbol M."/>
            <person name="Vorhoelter F.J."/>
            <person name="Weidner S."/>
            <person name="Wells D.H."/>
            <person name="Wong K."/>
            <person name="Yeh K.-C."/>
            <person name="Batut J."/>
        </authorList>
    </citation>
    <scope>NUCLEOTIDE SEQUENCE [LARGE SCALE GENOMIC DNA]</scope>
    <source>
        <strain>1021</strain>
    </source>
</reference>
<gene>
    <name evidence="1" type="primary">ctaA</name>
    <name type="ordered locus">R01239</name>
    <name type="ORF">SMc01800</name>
</gene>
<sequence>MAHAELATEQMLLKEIGRTERNRRQIRGWLAAVLFALFALVLVGGATRLTESGLSITEWKPVHGVIPPLSAEEWEEEFRLYQRIPQYEQINKGMTVDEFKTIFWWEWAHRLLARGIGVIFALPLFFFWVTGRIERRLRLPLLGILALGGFQGFIGWWMVSSGLAERTAVSQYRLATHLTIACLIFAACMWIYRGLCPHSDDAHPTKRSQGMAGAIAIMSLFQIYLGAIVAGLDAGLSYNTWPLMDGAIVPGGLFVQQPAWINLFENPKTVQFVHRLGAYLLFALALWHMIASLRAAPETTHARRSVLLFALVTVQAAIGITTLLLQVPIGWGVLHQGGALVVLGFAIAHWRGFVGTYPRDTAIEMRD</sequence>
<feature type="chain" id="PRO_0000349063" description="Heme A synthase">
    <location>
        <begin position="1"/>
        <end position="367"/>
    </location>
</feature>
<feature type="transmembrane region" description="Helical" evidence="1">
    <location>
        <begin position="26"/>
        <end position="46"/>
    </location>
</feature>
<feature type="transmembrane region" description="Helical" evidence="1">
    <location>
        <begin position="111"/>
        <end position="131"/>
    </location>
</feature>
<feature type="transmembrane region" description="Helical" evidence="1">
    <location>
        <begin position="139"/>
        <end position="159"/>
    </location>
</feature>
<feature type="transmembrane region" description="Helical" evidence="1">
    <location>
        <begin position="174"/>
        <end position="194"/>
    </location>
</feature>
<feature type="transmembrane region" description="Helical" evidence="1">
    <location>
        <begin position="212"/>
        <end position="232"/>
    </location>
</feature>
<feature type="transmembrane region" description="Helical" evidence="1">
    <location>
        <begin position="276"/>
        <end position="296"/>
    </location>
</feature>
<feature type="transmembrane region" description="Helical" evidence="1">
    <location>
        <begin position="305"/>
        <end position="325"/>
    </location>
</feature>
<feature type="transmembrane region" description="Helical" evidence="1">
    <location>
        <begin position="327"/>
        <end position="347"/>
    </location>
</feature>
<feature type="binding site" description="axial binding residue" evidence="1">
    <location>
        <position position="274"/>
    </location>
    <ligand>
        <name>heme</name>
        <dbReference type="ChEBI" id="CHEBI:30413"/>
    </ligand>
    <ligandPart>
        <name>Fe</name>
        <dbReference type="ChEBI" id="CHEBI:18248"/>
    </ligandPart>
</feature>
<feature type="binding site" description="axial binding residue" evidence="1">
    <location>
        <position position="335"/>
    </location>
    <ligand>
        <name>heme</name>
        <dbReference type="ChEBI" id="CHEBI:30413"/>
    </ligand>
    <ligandPart>
        <name>Fe</name>
        <dbReference type="ChEBI" id="CHEBI:18248"/>
    </ligandPart>
</feature>
<evidence type="ECO:0000255" key="1">
    <source>
        <dbReference type="HAMAP-Rule" id="MF_01665"/>
    </source>
</evidence>
<name>CTAA_RHIME</name>
<comment type="function">
    <text evidence="1">Catalyzes the conversion of heme O to heme A by two successive hydroxylations of the methyl group at C8. The first hydroxylation forms heme I, the second hydroxylation results in an unstable dihydroxymethyl group, which spontaneously dehydrates, resulting in the formyl group of heme A.</text>
</comment>
<comment type="catalytic activity">
    <reaction evidence="1">
        <text>Fe(II)-heme o + 2 A + H2O = Fe(II)-heme a + 2 AH2</text>
        <dbReference type="Rhea" id="RHEA:63388"/>
        <dbReference type="ChEBI" id="CHEBI:13193"/>
        <dbReference type="ChEBI" id="CHEBI:15377"/>
        <dbReference type="ChEBI" id="CHEBI:17499"/>
        <dbReference type="ChEBI" id="CHEBI:60530"/>
        <dbReference type="ChEBI" id="CHEBI:61715"/>
        <dbReference type="EC" id="1.17.99.9"/>
    </reaction>
    <physiologicalReaction direction="left-to-right" evidence="1">
        <dbReference type="Rhea" id="RHEA:63389"/>
    </physiologicalReaction>
</comment>
<comment type="cofactor">
    <cofactor evidence="1">
        <name>heme b</name>
        <dbReference type="ChEBI" id="CHEBI:60344"/>
    </cofactor>
</comment>
<comment type="pathway">
    <text evidence="1">Porphyrin-containing compound metabolism; heme A biosynthesis; heme A from heme O: step 1/1.</text>
</comment>
<comment type="subunit">
    <text evidence="1">Interacts with CtaB.</text>
</comment>
<comment type="subcellular location">
    <subcellularLocation>
        <location evidence="1">Cell membrane</location>
        <topology evidence="1">Multi-pass membrane protein</topology>
    </subcellularLocation>
</comment>
<comment type="similarity">
    <text evidence="1">Belongs to the COX15/CtaA family. Type 2 subfamily.</text>
</comment>
<organism>
    <name type="scientific">Rhizobium meliloti (strain 1021)</name>
    <name type="common">Ensifer meliloti</name>
    <name type="synonym">Sinorhizobium meliloti</name>
    <dbReference type="NCBI Taxonomy" id="266834"/>
    <lineage>
        <taxon>Bacteria</taxon>
        <taxon>Pseudomonadati</taxon>
        <taxon>Pseudomonadota</taxon>
        <taxon>Alphaproteobacteria</taxon>
        <taxon>Hyphomicrobiales</taxon>
        <taxon>Rhizobiaceae</taxon>
        <taxon>Sinorhizobium/Ensifer group</taxon>
        <taxon>Sinorhizobium</taxon>
    </lineage>
</organism>